<proteinExistence type="inferred from homology"/>
<evidence type="ECO:0000255" key="1">
    <source>
        <dbReference type="HAMAP-Rule" id="MF_01350"/>
    </source>
</evidence>
<keyword id="KW-0150">Chloroplast</keyword>
<keyword id="KW-0472">Membrane</keyword>
<keyword id="KW-0520">NAD</keyword>
<keyword id="KW-0521">NADP</keyword>
<keyword id="KW-0934">Plastid</keyword>
<keyword id="KW-0618">Plastoquinone</keyword>
<keyword id="KW-0874">Quinone</keyword>
<keyword id="KW-0793">Thylakoid</keyword>
<keyword id="KW-1278">Translocase</keyword>
<keyword id="KW-0812">Transmembrane</keyword>
<keyword id="KW-1133">Transmembrane helix</keyword>
<protein>
    <recommendedName>
        <fullName evidence="1">NAD(P)H-quinone oxidoreductase subunit 1, chloroplastic</fullName>
        <ecNumber evidence="1">7.1.1.-</ecNumber>
    </recommendedName>
    <alternativeName>
        <fullName evidence="1">NAD(P)H dehydrogenase subunit 1</fullName>
        <shortName evidence="1">NDH subunit 1</shortName>
    </alternativeName>
    <alternativeName>
        <fullName evidence="1">NADH-plastoquinone oxidoreductase subunit 1</fullName>
    </alternativeName>
</protein>
<comment type="function">
    <text evidence="1">NDH shuttles electrons from NAD(P)H:plastoquinone, via FMN and iron-sulfur (Fe-S) centers, to quinones in the photosynthetic chain and possibly in a chloroplast respiratory chain. The immediate electron acceptor for the enzyme in this species is believed to be plastoquinone. Couples the redox reaction to proton translocation, and thus conserves the redox energy in a proton gradient.</text>
</comment>
<comment type="catalytic activity">
    <reaction evidence="1">
        <text>a plastoquinone + NADH + (n+1) H(+)(in) = a plastoquinol + NAD(+) + n H(+)(out)</text>
        <dbReference type="Rhea" id="RHEA:42608"/>
        <dbReference type="Rhea" id="RHEA-COMP:9561"/>
        <dbReference type="Rhea" id="RHEA-COMP:9562"/>
        <dbReference type="ChEBI" id="CHEBI:15378"/>
        <dbReference type="ChEBI" id="CHEBI:17757"/>
        <dbReference type="ChEBI" id="CHEBI:57540"/>
        <dbReference type="ChEBI" id="CHEBI:57945"/>
        <dbReference type="ChEBI" id="CHEBI:62192"/>
    </reaction>
</comment>
<comment type="catalytic activity">
    <reaction evidence="1">
        <text>a plastoquinone + NADPH + (n+1) H(+)(in) = a plastoquinol + NADP(+) + n H(+)(out)</text>
        <dbReference type="Rhea" id="RHEA:42612"/>
        <dbReference type="Rhea" id="RHEA-COMP:9561"/>
        <dbReference type="Rhea" id="RHEA-COMP:9562"/>
        <dbReference type="ChEBI" id="CHEBI:15378"/>
        <dbReference type="ChEBI" id="CHEBI:17757"/>
        <dbReference type="ChEBI" id="CHEBI:57783"/>
        <dbReference type="ChEBI" id="CHEBI:58349"/>
        <dbReference type="ChEBI" id="CHEBI:62192"/>
    </reaction>
</comment>
<comment type="subunit">
    <text evidence="1">NDH is composed of at least 16 different subunits, 5 of which are encoded in the nucleus.</text>
</comment>
<comment type="subcellular location">
    <subcellularLocation>
        <location evidence="1">Plastid</location>
        <location evidence="1">Chloroplast thylakoid membrane</location>
        <topology evidence="1">Multi-pass membrane protein</topology>
    </subcellularLocation>
</comment>
<comment type="similarity">
    <text evidence="1">Belongs to the complex I subunit 1 family.</text>
</comment>
<reference key="1">
    <citation type="journal article" date="1999" name="Proc. Natl. Acad. Sci. U.S.A.">
        <title>The complete chloroplast DNA sequence of the green alga Nephroselmis olivacea: insights into the architecture of ancestral chloroplast genomes.</title>
        <authorList>
            <person name="Turmel M."/>
            <person name="Otis C."/>
            <person name="Lemieux C."/>
        </authorList>
    </citation>
    <scope>NUCLEOTIDE SEQUENCE [LARGE SCALE GENOMIC DNA]</scope>
    <source>
        <strain>NIES-484 / S-N-5-8</strain>
    </source>
</reference>
<dbReference type="EC" id="7.1.1.-" evidence="1"/>
<dbReference type="EMBL" id="AF137379">
    <property type="protein sequence ID" value="AAD54892.1"/>
    <property type="molecule type" value="Genomic_DNA"/>
</dbReference>
<dbReference type="RefSeq" id="NP_050921.1">
    <property type="nucleotide sequence ID" value="NC_000927.1"/>
</dbReference>
<dbReference type="SMR" id="Q9TKV5"/>
<dbReference type="GeneID" id="801918"/>
<dbReference type="GO" id="GO:0009535">
    <property type="term" value="C:chloroplast thylakoid membrane"/>
    <property type="evidence" value="ECO:0007669"/>
    <property type="project" value="UniProtKB-SubCell"/>
</dbReference>
<dbReference type="GO" id="GO:0003954">
    <property type="term" value="F:NADH dehydrogenase activity"/>
    <property type="evidence" value="ECO:0007669"/>
    <property type="project" value="TreeGrafter"/>
</dbReference>
<dbReference type="GO" id="GO:0016655">
    <property type="term" value="F:oxidoreductase activity, acting on NAD(P)H, quinone or similar compound as acceptor"/>
    <property type="evidence" value="ECO:0007669"/>
    <property type="project" value="UniProtKB-UniRule"/>
</dbReference>
<dbReference type="GO" id="GO:0048038">
    <property type="term" value="F:quinone binding"/>
    <property type="evidence" value="ECO:0007669"/>
    <property type="project" value="UniProtKB-KW"/>
</dbReference>
<dbReference type="GO" id="GO:0009060">
    <property type="term" value="P:aerobic respiration"/>
    <property type="evidence" value="ECO:0007669"/>
    <property type="project" value="TreeGrafter"/>
</dbReference>
<dbReference type="GO" id="GO:0019684">
    <property type="term" value="P:photosynthesis, light reaction"/>
    <property type="evidence" value="ECO:0007669"/>
    <property type="project" value="UniProtKB-UniRule"/>
</dbReference>
<dbReference type="HAMAP" id="MF_01350">
    <property type="entry name" value="NDH1_NuoH"/>
    <property type="match status" value="1"/>
</dbReference>
<dbReference type="InterPro" id="IPR001694">
    <property type="entry name" value="NADH_UbQ_OxRdtase_su1/FPO"/>
</dbReference>
<dbReference type="InterPro" id="IPR018086">
    <property type="entry name" value="NADH_UbQ_OxRdtase_su1_CS"/>
</dbReference>
<dbReference type="NCBIfam" id="NF004741">
    <property type="entry name" value="PRK06076.1-2"/>
    <property type="match status" value="1"/>
</dbReference>
<dbReference type="NCBIfam" id="NF004744">
    <property type="entry name" value="PRK06076.1-5"/>
    <property type="match status" value="1"/>
</dbReference>
<dbReference type="PANTHER" id="PTHR11432">
    <property type="entry name" value="NADH DEHYDROGENASE SUBUNIT 1"/>
    <property type="match status" value="1"/>
</dbReference>
<dbReference type="PANTHER" id="PTHR11432:SF3">
    <property type="entry name" value="NADH-UBIQUINONE OXIDOREDUCTASE CHAIN 1"/>
    <property type="match status" value="1"/>
</dbReference>
<dbReference type="Pfam" id="PF00146">
    <property type="entry name" value="NADHdh"/>
    <property type="match status" value="1"/>
</dbReference>
<dbReference type="PROSITE" id="PS00667">
    <property type="entry name" value="COMPLEX1_ND1_1"/>
    <property type="match status" value="1"/>
</dbReference>
<dbReference type="PROSITE" id="PS00668">
    <property type="entry name" value="COMPLEX1_ND1_2"/>
    <property type="match status" value="1"/>
</dbReference>
<accession>Q9TKV5</accession>
<name>NU1C_NEPOL</name>
<organism>
    <name type="scientific">Nephroselmis olivacea</name>
    <name type="common">Green alga</name>
    <dbReference type="NCBI Taxonomy" id="31312"/>
    <lineage>
        <taxon>Eukaryota</taxon>
        <taxon>Viridiplantae</taxon>
        <taxon>Chlorophyta</taxon>
        <taxon>Nephroselmidophyceae</taxon>
        <taxon>Nephroselmidales</taxon>
        <taxon>Nephroselmidaceae</taxon>
        <taxon>Nephroselmis</taxon>
    </lineage>
</organism>
<geneLocation type="chloroplast"/>
<feature type="chain" id="PRO_0000240025" description="NAD(P)H-quinone oxidoreductase subunit 1, chloroplastic">
    <location>
        <begin position="1"/>
        <end position="362"/>
    </location>
</feature>
<feature type="transmembrane region" description="Helical" evidence="1">
    <location>
        <begin position="31"/>
        <end position="51"/>
    </location>
</feature>
<feature type="transmembrane region" description="Helical" evidence="1">
    <location>
        <begin position="99"/>
        <end position="119"/>
    </location>
</feature>
<feature type="transmembrane region" description="Helical" evidence="1">
    <location>
        <begin position="132"/>
        <end position="152"/>
    </location>
</feature>
<feature type="transmembrane region" description="Helical" evidence="1">
    <location>
        <begin position="178"/>
        <end position="198"/>
    </location>
</feature>
<feature type="transmembrane region" description="Helical" evidence="1">
    <location>
        <begin position="206"/>
        <end position="226"/>
    </location>
</feature>
<feature type="transmembrane region" description="Helical" evidence="1">
    <location>
        <begin position="268"/>
        <end position="288"/>
    </location>
</feature>
<feature type="transmembrane region" description="Helical" evidence="1">
    <location>
        <begin position="303"/>
        <end position="323"/>
    </location>
</feature>
<feature type="transmembrane region" description="Helical" evidence="1">
    <location>
        <begin position="336"/>
        <end position="356"/>
    </location>
</feature>
<sequence>MTYVLDLKRSFLDACTWLIGDNFRDLGSVLWVPLPILSLVIVATLGVLVIVWLERKISAGVQQRVGPEYGGALGLLQPLADGLKLVFKEDVVPAKSDTWLFTLGPAVVVIPIFLAYLVVPFGQQLIIADLRIGIFFWIAISSIAPIGLLMSGYGSNNKYSFLGGLRAAAQSISYELPLAICVLSVCLLADSLSTVDIVESQSSWGILTWNIWRQPIGFVAFLIAALAECERLPFDLPEAEEELVAGYQTEYTGMKFGLFYVGSYVNLLVSGCFVTVLYLGGWHGPFAIDGILPDSPPFQVLDAFLGITWTLLKTFLFLFAAILTRWTLPRVRIDQLLDLGWKFLLPVSLGNLLLTASLKLLF</sequence>
<gene>
    <name evidence="1" type="primary">ndhA</name>
</gene>